<reference key="1">
    <citation type="journal article" date="2000" name="Nature">
        <title>Sequence and analysis of chromosome 3 of the plant Arabidopsis thaliana.</title>
        <authorList>
            <person name="Salanoubat M."/>
            <person name="Lemcke K."/>
            <person name="Rieger M."/>
            <person name="Ansorge W."/>
            <person name="Unseld M."/>
            <person name="Fartmann B."/>
            <person name="Valle G."/>
            <person name="Bloecker H."/>
            <person name="Perez-Alonso M."/>
            <person name="Obermaier B."/>
            <person name="Delseny M."/>
            <person name="Boutry M."/>
            <person name="Grivell L.A."/>
            <person name="Mache R."/>
            <person name="Puigdomenech P."/>
            <person name="De Simone V."/>
            <person name="Choisne N."/>
            <person name="Artiguenave F."/>
            <person name="Robert C."/>
            <person name="Brottier P."/>
            <person name="Wincker P."/>
            <person name="Cattolico L."/>
            <person name="Weissenbach J."/>
            <person name="Saurin W."/>
            <person name="Quetier F."/>
            <person name="Schaefer M."/>
            <person name="Mueller-Auer S."/>
            <person name="Gabel C."/>
            <person name="Fuchs M."/>
            <person name="Benes V."/>
            <person name="Wurmbach E."/>
            <person name="Drzonek H."/>
            <person name="Erfle H."/>
            <person name="Jordan N."/>
            <person name="Bangert S."/>
            <person name="Wiedelmann R."/>
            <person name="Kranz H."/>
            <person name="Voss H."/>
            <person name="Holland R."/>
            <person name="Brandt P."/>
            <person name="Nyakatura G."/>
            <person name="Vezzi A."/>
            <person name="D'Angelo M."/>
            <person name="Pallavicini A."/>
            <person name="Toppo S."/>
            <person name="Simionati B."/>
            <person name="Conrad A."/>
            <person name="Hornischer K."/>
            <person name="Kauer G."/>
            <person name="Loehnert T.-H."/>
            <person name="Nordsiek G."/>
            <person name="Reichelt J."/>
            <person name="Scharfe M."/>
            <person name="Schoen O."/>
            <person name="Bargues M."/>
            <person name="Terol J."/>
            <person name="Climent J."/>
            <person name="Navarro P."/>
            <person name="Collado C."/>
            <person name="Perez-Perez A."/>
            <person name="Ottenwaelder B."/>
            <person name="Duchemin D."/>
            <person name="Cooke R."/>
            <person name="Laudie M."/>
            <person name="Berger-Llauro C."/>
            <person name="Purnelle B."/>
            <person name="Masuy D."/>
            <person name="de Haan M."/>
            <person name="Maarse A.C."/>
            <person name="Alcaraz J.-P."/>
            <person name="Cottet A."/>
            <person name="Casacuberta E."/>
            <person name="Monfort A."/>
            <person name="Argiriou A."/>
            <person name="Flores M."/>
            <person name="Liguori R."/>
            <person name="Vitale D."/>
            <person name="Mannhaupt G."/>
            <person name="Haase D."/>
            <person name="Schoof H."/>
            <person name="Rudd S."/>
            <person name="Zaccaria P."/>
            <person name="Mewes H.-W."/>
            <person name="Mayer K.F.X."/>
            <person name="Kaul S."/>
            <person name="Town C.D."/>
            <person name="Koo H.L."/>
            <person name="Tallon L.J."/>
            <person name="Jenkins J."/>
            <person name="Rooney T."/>
            <person name="Rizzo M."/>
            <person name="Walts A."/>
            <person name="Utterback T."/>
            <person name="Fujii C.Y."/>
            <person name="Shea T.P."/>
            <person name="Creasy T.H."/>
            <person name="Haas B."/>
            <person name="Maiti R."/>
            <person name="Wu D."/>
            <person name="Peterson J."/>
            <person name="Van Aken S."/>
            <person name="Pai G."/>
            <person name="Militscher J."/>
            <person name="Sellers P."/>
            <person name="Gill J.E."/>
            <person name="Feldblyum T.V."/>
            <person name="Preuss D."/>
            <person name="Lin X."/>
            <person name="Nierman W.C."/>
            <person name="Salzberg S.L."/>
            <person name="White O."/>
            <person name="Venter J.C."/>
            <person name="Fraser C.M."/>
            <person name="Kaneko T."/>
            <person name="Nakamura Y."/>
            <person name="Sato S."/>
            <person name="Kato T."/>
            <person name="Asamizu E."/>
            <person name="Sasamoto S."/>
            <person name="Kimura T."/>
            <person name="Idesawa K."/>
            <person name="Kawashima K."/>
            <person name="Kishida Y."/>
            <person name="Kiyokawa C."/>
            <person name="Kohara M."/>
            <person name="Matsumoto M."/>
            <person name="Matsuno A."/>
            <person name="Muraki A."/>
            <person name="Nakayama S."/>
            <person name="Nakazaki N."/>
            <person name="Shinpo S."/>
            <person name="Takeuchi C."/>
            <person name="Wada T."/>
            <person name="Watanabe A."/>
            <person name="Yamada M."/>
            <person name="Yasuda M."/>
            <person name="Tabata S."/>
        </authorList>
    </citation>
    <scope>NUCLEOTIDE SEQUENCE [LARGE SCALE GENOMIC DNA]</scope>
    <source>
        <strain>cv. Columbia</strain>
    </source>
</reference>
<reference key="2">
    <citation type="journal article" date="2017" name="Plant J.">
        <title>Araport11: a complete reannotation of the Arabidopsis thaliana reference genome.</title>
        <authorList>
            <person name="Cheng C.Y."/>
            <person name="Krishnakumar V."/>
            <person name="Chan A.P."/>
            <person name="Thibaud-Nissen F."/>
            <person name="Schobel S."/>
            <person name="Town C.D."/>
        </authorList>
    </citation>
    <scope>GENOME REANNOTATION</scope>
    <source>
        <strain>cv. Columbia</strain>
    </source>
</reference>
<reference key="3">
    <citation type="journal article" date="2003" name="Science">
        <title>Empirical analysis of transcriptional activity in the Arabidopsis genome.</title>
        <authorList>
            <person name="Yamada K."/>
            <person name="Lim J."/>
            <person name="Dale J.M."/>
            <person name="Chen H."/>
            <person name="Shinn P."/>
            <person name="Palm C.J."/>
            <person name="Southwick A.M."/>
            <person name="Wu H.C."/>
            <person name="Kim C.J."/>
            <person name="Nguyen M."/>
            <person name="Pham P.K."/>
            <person name="Cheuk R.F."/>
            <person name="Karlin-Newmann G."/>
            <person name="Liu S.X."/>
            <person name="Lam B."/>
            <person name="Sakano H."/>
            <person name="Wu T."/>
            <person name="Yu G."/>
            <person name="Miranda M."/>
            <person name="Quach H.L."/>
            <person name="Tripp M."/>
            <person name="Chang C.H."/>
            <person name="Lee J.M."/>
            <person name="Toriumi M.J."/>
            <person name="Chan M.M."/>
            <person name="Tang C.C."/>
            <person name="Onodera C.S."/>
            <person name="Deng J.M."/>
            <person name="Akiyama K."/>
            <person name="Ansari Y."/>
            <person name="Arakawa T."/>
            <person name="Banh J."/>
            <person name="Banno F."/>
            <person name="Bowser L."/>
            <person name="Brooks S.Y."/>
            <person name="Carninci P."/>
            <person name="Chao Q."/>
            <person name="Choy N."/>
            <person name="Enju A."/>
            <person name="Goldsmith A.D."/>
            <person name="Gurjal M."/>
            <person name="Hansen N.F."/>
            <person name="Hayashizaki Y."/>
            <person name="Johnson-Hopson C."/>
            <person name="Hsuan V.W."/>
            <person name="Iida K."/>
            <person name="Karnes M."/>
            <person name="Khan S."/>
            <person name="Koesema E."/>
            <person name="Ishida J."/>
            <person name="Jiang P.X."/>
            <person name="Jones T."/>
            <person name="Kawai J."/>
            <person name="Kamiya A."/>
            <person name="Meyers C."/>
            <person name="Nakajima M."/>
            <person name="Narusaka M."/>
            <person name="Seki M."/>
            <person name="Sakurai T."/>
            <person name="Satou M."/>
            <person name="Tamse R."/>
            <person name="Vaysberg M."/>
            <person name="Wallender E.K."/>
            <person name="Wong C."/>
            <person name="Yamamura Y."/>
            <person name="Yuan S."/>
            <person name="Shinozaki K."/>
            <person name="Davis R.W."/>
            <person name="Theologis A."/>
            <person name="Ecker J.R."/>
        </authorList>
    </citation>
    <scope>NUCLEOTIDE SEQUENCE [LARGE SCALE MRNA]</scope>
    <source>
        <strain>cv. Columbia</strain>
    </source>
</reference>
<reference key="4">
    <citation type="journal article" date="2006" name="BMC Evol. Biol.">
        <title>The monosaccharide transporter gene family in land plants is ancient and shows differential subfamily expression and expansion across lineages.</title>
        <authorList>
            <person name="Johnson D.A."/>
            <person name="Hill J.P."/>
            <person name="Thomas M.A."/>
        </authorList>
    </citation>
    <scope>GENE FAMILY</scope>
</reference>
<keyword id="KW-0472">Membrane</keyword>
<keyword id="KW-1185">Reference proteome</keyword>
<keyword id="KW-0762">Sugar transport</keyword>
<keyword id="KW-0812">Transmembrane</keyword>
<keyword id="KW-1133">Transmembrane helix</keyword>
<keyword id="KW-0813">Transport</keyword>
<name>XYLL1_ARATH</name>
<organism>
    <name type="scientific">Arabidopsis thaliana</name>
    <name type="common">Mouse-ear cress</name>
    <dbReference type="NCBI Taxonomy" id="3702"/>
    <lineage>
        <taxon>Eukaryota</taxon>
        <taxon>Viridiplantae</taxon>
        <taxon>Streptophyta</taxon>
        <taxon>Embryophyta</taxon>
        <taxon>Tracheophyta</taxon>
        <taxon>Spermatophyta</taxon>
        <taxon>Magnoliopsida</taxon>
        <taxon>eudicotyledons</taxon>
        <taxon>Gunneridae</taxon>
        <taxon>Pentapetalae</taxon>
        <taxon>rosids</taxon>
        <taxon>malvids</taxon>
        <taxon>Brassicales</taxon>
        <taxon>Brassicaceae</taxon>
        <taxon>Camelineae</taxon>
        <taxon>Arabidopsis</taxon>
    </lineage>
</organism>
<feature type="chain" id="PRO_0000259879" description="D-xylose-proton symporter-like 1">
    <location>
        <begin position="1"/>
        <end position="503"/>
    </location>
</feature>
<feature type="transmembrane region" description="Helical; Name=1" evidence="2">
    <location>
        <begin position="51"/>
        <end position="73"/>
    </location>
</feature>
<feature type="transmembrane region" description="Helical; Name=2" evidence="2">
    <location>
        <begin position="95"/>
        <end position="115"/>
    </location>
</feature>
<feature type="transmembrane region" description="Helical; Name=3" evidence="2">
    <location>
        <begin position="129"/>
        <end position="149"/>
    </location>
</feature>
<feature type="transmembrane region" description="Helical; Name=4" evidence="2">
    <location>
        <begin position="152"/>
        <end position="172"/>
    </location>
</feature>
<feature type="transmembrane region" description="Helical; Name=5" evidence="2">
    <location>
        <begin position="190"/>
        <end position="210"/>
    </location>
</feature>
<feature type="transmembrane region" description="Helical; Name=6" evidence="2">
    <location>
        <begin position="213"/>
        <end position="233"/>
    </location>
</feature>
<feature type="transmembrane region" description="Helical; Name=7" evidence="2">
    <location>
        <begin position="305"/>
        <end position="325"/>
    </location>
</feature>
<feature type="transmembrane region" description="Helical; Name=8" evidence="2">
    <location>
        <begin position="346"/>
        <end position="366"/>
    </location>
</feature>
<feature type="transmembrane region" description="Helical; Name=9" evidence="2">
    <location>
        <begin position="374"/>
        <end position="394"/>
    </location>
</feature>
<feature type="transmembrane region" description="Helical; Name=10" evidence="2">
    <location>
        <begin position="405"/>
        <end position="425"/>
    </location>
</feature>
<feature type="transmembrane region" description="Helical; Name=11" evidence="2">
    <location>
        <begin position="437"/>
        <end position="457"/>
    </location>
</feature>
<feature type="transmembrane region" description="Helical; Name=12" evidence="2">
    <location>
        <begin position="467"/>
        <end position="487"/>
    </location>
</feature>
<feature type="region of interest" description="Disordered" evidence="3">
    <location>
        <begin position="1"/>
        <end position="23"/>
    </location>
</feature>
<feature type="compositionally biased region" description="Low complexity" evidence="3">
    <location>
        <begin position="8"/>
        <end position="23"/>
    </location>
</feature>
<proteinExistence type="evidence at transcript level"/>
<gene>
    <name type="ordered locus">At3g03090</name>
    <name type="ORF">T17B22.22</name>
</gene>
<comment type="subcellular location">
    <subcellularLocation>
        <location evidence="1">Membrane</location>
        <topology evidence="1">Multi-pass membrane protein</topology>
    </subcellularLocation>
</comment>
<comment type="similarity">
    <text evidence="4">Belongs to the major facilitator superfamily. Sugar transporter (TC 2.A.1.1) family.</text>
</comment>
<comment type="sequence caution" evidence="4">
    <conflict type="erroneous gene model prediction">
        <sequence resource="EMBL-CDS" id="AAF26115"/>
    </conflict>
</comment>
<evidence type="ECO:0000250" key="1"/>
<evidence type="ECO:0000255" key="2"/>
<evidence type="ECO:0000256" key="3">
    <source>
        <dbReference type="SAM" id="MobiDB-lite"/>
    </source>
</evidence>
<evidence type="ECO:0000305" key="4"/>
<dbReference type="EMBL" id="AC012328">
    <property type="protein sequence ID" value="AAF26115.1"/>
    <property type="status" value="ALT_SEQ"/>
    <property type="molecule type" value="Genomic_DNA"/>
</dbReference>
<dbReference type="EMBL" id="CP002686">
    <property type="protein sequence ID" value="AEE73900.1"/>
    <property type="molecule type" value="Genomic_DNA"/>
</dbReference>
<dbReference type="EMBL" id="AY140054">
    <property type="protein sequence ID" value="AAM98195.1"/>
    <property type="molecule type" value="mRNA"/>
</dbReference>
<dbReference type="EMBL" id="BT010375">
    <property type="protein sequence ID" value="AAQ56818.1"/>
    <property type="molecule type" value="mRNA"/>
</dbReference>
<dbReference type="RefSeq" id="NP_186959.2">
    <property type="nucleotide sequence ID" value="NM_111179.4"/>
</dbReference>
<dbReference type="SMR" id="Q8L6Z8"/>
<dbReference type="FunCoup" id="Q8L6Z8">
    <property type="interactions" value="47"/>
</dbReference>
<dbReference type="STRING" id="3702.Q8L6Z8"/>
<dbReference type="TCDB" id="2.A.1.1.45">
    <property type="family name" value="the major facilitator superfamily (mfs)"/>
</dbReference>
<dbReference type="PaxDb" id="3702-AT3G03090.1"/>
<dbReference type="ProteomicsDB" id="242428"/>
<dbReference type="EnsemblPlants" id="AT3G03090.1">
    <property type="protein sequence ID" value="AT3G03090.1"/>
    <property type="gene ID" value="AT3G03090"/>
</dbReference>
<dbReference type="GeneID" id="821117"/>
<dbReference type="Gramene" id="AT3G03090.1">
    <property type="protein sequence ID" value="AT3G03090.1"/>
    <property type="gene ID" value="AT3G03090"/>
</dbReference>
<dbReference type="KEGG" id="ath:AT3G03090"/>
<dbReference type="Araport" id="AT3G03090"/>
<dbReference type="TAIR" id="AT3G03090">
    <property type="gene designation" value="VGT1"/>
</dbReference>
<dbReference type="eggNOG" id="KOG0254">
    <property type="taxonomic scope" value="Eukaryota"/>
</dbReference>
<dbReference type="HOGENOM" id="CLU_001265_30_5_1"/>
<dbReference type="InParanoid" id="Q8L6Z8"/>
<dbReference type="OMA" id="FAGWWTW"/>
<dbReference type="OrthoDB" id="6612291at2759"/>
<dbReference type="PhylomeDB" id="Q8L6Z8"/>
<dbReference type="PRO" id="PR:Q8L6Z8"/>
<dbReference type="Proteomes" id="UP000006548">
    <property type="component" value="Chromosome 3"/>
</dbReference>
<dbReference type="ExpressionAtlas" id="Q8L6Z8">
    <property type="expression patterns" value="baseline and differential"/>
</dbReference>
<dbReference type="GO" id="GO:0000325">
    <property type="term" value="C:plant-type vacuole"/>
    <property type="evidence" value="ECO:0007005"/>
    <property type="project" value="TAIR"/>
</dbReference>
<dbReference type="GO" id="GO:0009705">
    <property type="term" value="C:plant-type vacuole membrane"/>
    <property type="evidence" value="ECO:0000314"/>
    <property type="project" value="TAIR"/>
</dbReference>
<dbReference type="GO" id="GO:0005774">
    <property type="term" value="C:vacuolar membrane"/>
    <property type="evidence" value="ECO:0000314"/>
    <property type="project" value="TAIR"/>
</dbReference>
<dbReference type="GO" id="GO:0005353">
    <property type="term" value="F:fructose transmembrane transporter activity"/>
    <property type="evidence" value="ECO:0000314"/>
    <property type="project" value="TAIR"/>
</dbReference>
<dbReference type="GO" id="GO:1904659">
    <property type="term" value="P:D-glucose transmembrane transport"/>
    <property type="evidence" value="ECO:0000314"/>
    <property type="project" value="TAIR"/>
</dbReference>
<dbReference type="GO" id="GO:0015755">
    <property type="term" value="P:fructose transmembrane transport"/>
    <property type="evidence" value="ECO:0000314"/>
    <property type="project" value="TAIR"/>
</dbReference>
<dbReference type="GO" id="GO:0009911">
    <property type="term" value="P:positive regulation of flower development"/>
    <property type="evidence" value="ECO:0000315"/>
    <property type="project" value="TAIR"/>
</dbReference>
<dbReference type="GO" id="GO:0009624">
    <property type="term" value="P:response to nematode"/>
    <property type="evidence" value="ECO:0007007"/>
    <property type="project" value="TAIR"/>
</dbReference>
<dbReference type="GO" id="GO:0009845">
    <property type="term" value="P:seed germination"/>
    <property type="evidence" value="ECO:0000315"/>
    <property type="project" value="TAIR"/>
</dbReference>
<dbReference type="CDD" id="cd17362">
    <property type="entry name" value="MFS_GLUT10_12_Class3_like"/>
    <property type="match status" value="1"/>
</dbReference>
<dbReference type="FunFam" id="1.20.1250.20:FF:000118">
    <property type="entry name" value="D-xylose-proton symporter-like 3, chloroplastic"/>
    <property type="match status" value="1"/>
</dbReference>
<dbReference type="Gene3D" id="1.20.1250.20">
    <property type="entry name" value="MFS general substrate transporter like domains"/>
    <property type="match status" value="1"/>
</dbReference>
<dbReference type="InterPro" id="IPR020846">
    <property type="entry name" value="MFS_dom"/>
</dbReference>
<dbReference type="InterPro" id="IPR005828">
    <property type="entry name" value="MFS_sugar_transport-like"/>
</dbReference>
<dbReference type="InterPro" id="IPR050820">
    <property type="entry name" value="MFS_Sugar_Transporter"/>
</dbReference>
<dbReference type="InterPro" id="IPR036259">
    <property type="entry name" value="MFS_trans_sf"/>
</dbReference>
<dbReference type="InterPro" id="IPR003663">
    <property type="entry name" value="Sugar/inositol_transpt"/>
</dbReference>
<dbReference type="InterPro" id="IPR005829">
    <property type="entry name" value="Sugar_transporter_CS"/>
</dbReference>
<dbReference type="NCBIfam" id="TIGR00879">
    <property type="entry name" value="SP"/>
    <property type="match status" value="1"/>
</dbReference>
<dbReference type="PANTHER" id="PTHR48023:SF1">
    <property type="entry name" value="D-XYLOSE-PROTON SYMPORTER-LIKE 1"/>
    <property type="match status" value="1"/>
</dbReference>
<dbReference type="PANTHER" id="PTHR48023">
    <property type="entry name" value="D-XYLOSE-PROTON SYMPORTER-LIKE 2"/>
    <property type="match status" value="1"/>
</dbReference>
<dbReference type="Pfam" id="PF00083">
    <property type="entry name" value="Sugar_tr"/>
    <property type="match status" value="1"/>
</dbReference>
<dbReference type="PRINTS" id="PR00171">
    <property type="entry name" value="SUGRTRNSPORT"/>
</dbReference>
<dbReference type="SUPFAM" id="SSF103473">
    <property type="entry name" value="MFS general substrate transporter"/>
    <property type="match status" value="1"/>
</dbReference>
<dbReference type="PROSITE" id="PS50850">
    <property type="entry name" value="MFS"/>
    <property type="match status" value="1"/>
</dbReference>
<dbReference type="PROSITE" id="PS00216">
    <property type="entry name" value="SUGAR_TRANSPORT_1"/>
    <property type="match status" value="1"/>
</dbReference>
<protein>
    <recommendedName>
        <fullName>D-xylose-proton symporter-like 1</fullName>
    </recommendedName>
</protein>
<sequence>MGFDPENQSISSVGQVVGDSSSGGITAEKEPLLKENHSPENYSVLAAIPPFLFPALGALLFGYEIGATSCAIMSLKSPTLSGISWYDLSSVDVGIITSGSLYGALIGSIVAFSVADIIGRRKELILAAFLYLVGAIVTVVAPVFSILIIGRVTYGMGIGLTMHAAPMYIAETAPSQIRGRMISLKEFSTVLGMVGGYGIGSLWITVISGWRYMYATILPFPVIMGTGMCWLPASPRWLLLRALQGQGNGENLQQAAIRSLCRLRGSVIADSAAEQVNEILAELSLVGEDKEATFGELFRGKCLKALTIAGGLVLFQQITGQPSVLYYAPSILQTAGFSAAADATRISILLGLLKLVMTGVSVIVIDRVGRRPLLLCGVSGMVISLFLLGSYYMFYKNVPAVAVAALLLYVGCYQLSFGPIGWLMISEIFPLKLRGRGISLAVLVNFGANALVTFAFSPLKELLGAGILFCAFGVICVVSLFFIYYIVPETKGLTLEEIEAKCL</sequence>
<accession>Q8L6Z8</accession>
<accession>Q9M9M8</accession>